<dbReference type="EC" id="3.1.-.-"/>
<dbReference type="EMBL" id="AJ238948">
    <property type="protein sequence ID" value="CAB59896.1"/>
    <property type="molecule type" value="Genomic_DNA"/>
</dbReference>
<dbReference type="SMR" id="Q9RLM5"/>
<dbReference type="REBASE" id="152666">
    <property type="entry name" value="V.Rph744ORF7P"/>
</dbReference>
<dbReference type="REBASE" id="152682">
    <property type="entry name" value="V.Rph620ORF371P"/>
</dbReference>
<dbReference type="REBASE" id="152764">
    <property type="entry name" value="V.Rsp541ORF1071P"/>
</dbReference>
<dbReference type="REBASE" id="152772">
    <property type="entry name" value="V.Rsp941ORF1071P"/>
</dbReference>
<dbReference type="REBASE" id="251328">
    <property type="entry name" value="V.BliADL4ORF3338P"/>
</dbReference>
<dbReference type="REBASE" id="296185">
    <property type="entry name" value="V.Bve83ORF3864P"/>
</dbReference>
<dbReference type="REBASE" id="4237">
    <property type="entry name" value="V.NmeDIP"/>
</dbReference>
<dbReference type="OMA" id="GCPQHAT"/>
<dbReference type="GO" id="GO:0004519">
    <property type="term" value="F:endonuclease activity"/>
    <property type="evidence" value="ECO:0007669"/>
    <property type="project" value="UniProtKB-KW"/>
</dbReference>
<dbReference type="GO" id="GO:0009307">
    <property type="term" value="P:DNA restriction-modification system"/>
    <property type="evidence" value="ECO:0007669"/>
    <property type="project" value="UniProtKB-KW"/>
</dbReference>
<dbReference type="GO" id="GO:0006298">
    <property type="term" value="P:mismatch repair"/>
    <property type="evidence" value="ECO:0007669"/>
    <property type="project" value="InterPro"/>
</dbReference>
<dbReference type="CDD" id="cd00221">
    <property type="entry name" value="Vsr"/>
    <property type="match status" value="1"/>
</dbReference>
<dbReference type="Gene3D" id="3.40.960.10">
    <property type="entry name" value="VSR Endonuclease"/>
    <property type="match status" value="1"/>
</dbReference>
<dbReference type="InterPro" id="IPR004603">
    <property type="entry name" value="DNA_mismatch_endonuc_vsr"/>
</dbReference>
<dbReference type="InterPro" id="IPR007569">
    <property type="entry name" value="DUF559"/>
</dbReference>
<dbReference type="InterPro" id="IPR011335">
    <property type="entry name" value="Restrct_endonuc-II-like"/>
</dbReference>
<dbReference type="NCBIfam" id="TIGR00632">
    <property type="entry name" value="vsr"/>
    <property type="match status" value="1"/>
</dbReference>
<dbReference type="Pfam" id="PF04480">
    <property type="entry name" value="DUF559"/>
    <property type="match status" value="1"/>
</dbReference>
<dbReference type="Pfam" id="PF03852">
    <property type="entry name" value="Vsr"/>
    <property type="match status" value="1"/>
</dbReference>
<dbReference type="PIRSF" id="PIRSF018267">
    <property type="entry name" value="VSR_endonuc"/>
    <property type="match status" value="1"/>
</dbReference>
<dbReference type="SUPFAM" id="SSF52980">
    <property type="entry name" value="Restriction endonuclease-like"/>
    <property type="match status" value="1"/>
</dbReference>
<accession>Q9RLM5</accession>
<proteinExistence type="inferred from homology"/>
<keyword id="KW-0227">DNA damage</keyword>
<keyword id="KW-0234">DNA repair</keyword>
<keyword id="KW-0255">Endonuclease</keyword>
<keyword id="KW-0378">Hydrolase</keyword>
<keyword id="KW-0540">Nuclease</keyword>
<keyword id="KW-0680">Restriction system</keyword>
<reference key="1">
    <citation type="journal article" date="2000" name="J. Bacteriol.">
        <title>Differential distribution of novel restriction-modification systems in clonal lineages of Neisseria meningitidis.</title>
        <authorList>
            <person name="Claus H."/>
            <person name="Friedrich A."/>
            <person name="Frosch M."/>
            <person name="Vogel U."/>
        </authorList>
    </citation>
    <scope>NUCLEOTIDE SEQUENCE [GENOMIC DNA]</scope>
    <source>
        <strain>2120 / Serogroup C / Serotype NT</strain>
    </source>
</reference>
<reference key="2">
    <citation type="journal article" date="2003" name="Nucleic Acids Res.">
        <title>A nomenclature for restriction enzymes, DNA methyltransferases, homing endonucleases and their genes.</title>
        <authorList>
            <person name="Roberts R.J."/>
            <person name="Belfort M."/>
            <person name="Bestor T."/>
            <person name="Bhagwat A.S."/>
            <person name="Bickle T.A."/>
            <person name="Bitinaite J."/>
            <person name="Blumenthal R.M."/>
            <person name="Degtyarev S.K."/>
            <person name="Dryden D.T."/>
            <person name="Dybvig K."/>
            <person name="Firman K."/>
            <person name="Gromova E.S."/>
            <person name="Gumport R.I."/>
            <person name="Halford S.E."/>
            <person name="Hattman S."/>
            <person name="Heitman J."/>
            <person name="Hornby D.P."/>
            <person name="Janulaitis A."/>
            <person name="Jeltsch A."/>
            <person name="Josephsen J."/>
            <person name="Kiss A."/>
            <person name="Klaenhammer T.R."/>
            <person name="Kobayashi I."/>
            <person name="Kong H."/>
            <person name="Krueger D.H."/>
            <person name="Lacks S."/>
            <person name="Marinus M.G."/>
            <person name="Miyahara M."/>
            <person name="Morgan R.D."/>
            <person name="Murray N.E."/>
            <person name="Nagaraja V."/>
            <person name="Piekarowicz A."/>
            <person name="Pingoud A."/>
            <person name="Raleigh E."/>
            <person name="Rao D.N."/>
            <person name="Reich N."/>
            <person name="Repin V.E."/>
            <person name="Selker E.U."/>
            <person name="Shaw P.C."/>
            <person name="Stein D.C."/>
            <person name="Stoddard B.L."/>
            <person name="Szybalski W."/>
            <person name="Trautner T.A."/>
            <person name="Van Etten J.L."/>
            <person name="Vitor J.M."/>
            <person name="Wilson G.G."/>
            <person name="Xu S.Y."/>
        </authorList>
    </citation>
    <scope>NOMENCLATURE</scope>
</reference>
<organism>
    <name type="scientific">Neisseria meningitidis serogroup C</name>
    <dbReference type="NCBI Taxonomy" id="135720"/>
    <lineage>
        <taxon>Bacteria</taxon>
        <taxon>Pseudomonadati</taxon>
        <taxon>Pseudomonadota</taxon>
        <taxon>Betaproteobacteria</taxon>
        <taxon>Neisseriales</taxon>
        <taxon>Neisseriaceae</taxon>
        <taxon>Neisseria</taxon>
    </lineage>
</organism>
<evidence type="ECO:0000250" key="1">
    <source>
        <dbReference type="UniProtKB" id="P09184"/>
    </source>
</evidence>
<evidence type="ECO:0000256" key="2">
    <source>
        <dbReference type="SAM" id="MobiDB-lite"/>
    </source>
</evidence>
<evidence type="ECO:0000303" key="3">
    <source>
    </source>
</evidence>
<evidence type="ECO:0000305" key="4"/>
<protein>
    <recommendedName>
        <fullName evidence="3">Type II nicking enzyme V.NmeDIP</fullName>
        <shortName>V.NmeDIP</shortName>
        <ecNumber>3.1.-.-</ecNumber>
    </recommendedName>
    <alternativeName>
        <fullName>NmeDIP very short patch repair endonuclease</fullName>
    </alternativeName>
</protein>
<comment type="function">
    <text evidence="1">May nick NmeDI sequences that contain T/G mispairs resulting from m5C-deamination. If unrepaired, these mismatches can lead to C-to-T transition mutations. The very short patch (VSP) repair process counteracts the mutagenic process by repairing the mismatches in favor of the G-containing strand. This enzyme is an endonuclease that nicks double-stranded DNA within the sequence RTCGGB next to the thymidine residue that is mismatched to 2'-deoxyguanosine. The incision is mismatch-dependent and strand-specific.</text>
</comment>
<comment type="similarity">
    <text evidence="4">Belongs to the Vsr family.</text>
</comment>
<name>VSN1_NEIMC</name>
<sequence>MDRLTPEQRKKCMQSNKSKGTKPELALAKAMWALGLRYRKNSGSIFGKPDFSFKKYKVAVFVDGEFWHGKDWEQRKAEIKGNREFWIAKIERNIRRDMEVTGRLKVEGWAVLRFWSNDVVKNTTCCAEKVRQAVRDKQGLSKFQTREK</sequence>
<gene>
    <name type="primary">vsr</name>
    <name type="synonym">nmeDIVP</name>
</gene>
<feature type="chain" id="PRO_0000200291" description="Type II nicking enzyme V.NmeDIP">
    <location>
        <begin position="1"/>
        <end position="148"/>
    </location>
</feature>
<feature type="region of interest" description="Disordered" evidence="2">
    <location>
        <begin position="1"/>
        <end position="21"/>
    </location>
</feature>
<feature type="compositionally biased region" description="Basic and acidic residues" evidence="2">
    <location>
        <begin position="1"/>
        <end position="10"/>
    </location>
</feature>